<accession>A5N497</accession>
<comment type="function">
    <text evidence="1">Catalyzes the formation of phosphatidylethanolamine (PtdEtn) from phosphatidylserine (PtdSer).</text>
</comment>
<comment type="catalytic activity">
    <reaction evidence="1">
        <text>a 1,2-diacyl-sn-glycero-3-phospho-L-serine + H(+) = a 1,2-diacyl-sn-glycero-3-phosphoethanolamine + CO2</text>
        <dbReference type="Rhea" id="RHEA:20828"/>
        <dbReference type="ChEBI" id="CHEBI:15378"/>
        <dbReference type="ChEBI" id="CHEBI:16526"/>
        <dbReference type="ChEBI" id="CHEBI:57262"/>
        <dbReference type="ChEBI" id="CHEBI:64612"/>
        <dbReference type="EC" id="4.1.1.65"/>
    </reaction>
</comment>
<comment type="cofactor">
    <cofactor evidence="1">
        <name>pyruvate</name>
        <dbReference type="ChEBI" id="CHEBI:15361"/>
    </cofactor>
    <text evidence="1">Binds 1 pyruvoyl group covalently per subunit.</text>
</comment>
<comment type="pathway">
    <text evidence="1">Phospholipid metabolism; phosphatidylethanolamine biosynthesis; phosphatidylethanolamine from CDP-diacylglycerol: step 2/2.</text>
</comment>
<comment type="subunit">
    <text evidence="1">Heterodimer of a large membrane-associated beta subunit and a small pyruvoyl-containing alpha subunit.</text>
</comment>
<comment type="subcellular location">
    <subcellularLocation>
        <location evidence="1">Cell membrane</location>
        <topology evidence="1">Peripheral membrane protein</topology>
    </subcellularLocation>
</comment>
<comment type="PTM">
    <text evidence="1">Is synthesized initially as an inactive proenzyme. Formation of the active enzyme involves a self-maturation process in which the active site pyruvoyl group is generated from an internal serine residue via an autocatalytic post-translational modification. Two non-identical subunits are generated from the proenzyme in this reaction, and the pyruvate is formed at the N-terminus of the alpha chain, which is derived from the carboxyl end of the proenzyme. The autoendoproteolytic cleavage occurs by a canonical serine protease mechanism, in which the side chain hydroxyl group of the serine supplies its oxygen atom to form the C-terminus of the beta chain, while the remainder of the serine residue undergoes an oxidative deamination to produce ammonia and the pyruvoyl prosthetic group on the alpha chain. During this reaction, the Ser that is part of the protease active site of the proenzyme becomes the pyruvoyl prosthetic group, which constitutes an essential element of the active site of the mature decarboxylase.</text>
</comment>
<comment type="similarity">
    <text evidence="1">Belongs to the phosphatidylserine decarboxylase family. PSD-B subfamily. Prokaryotic type II sub-subfamily.</text>
</comment>
<name>PSD_CLOK5</name>
<dbReference type="EC" id="4.1.1.65" evidence="1"/>
<dbReference type="EMBL" id="CP000673">
    <property type="protein sequence ID" value="EDK32128.1"/>
    <property type="molecule type" value="Genomic_DNA"/>
</dbReference>
<dbReference type="RefSeq" id="WP_011988654.1">
    <property type="nucleotide sequence ID" value="NC_009706.1"/>
</dbReference>
<dbReference type="SMR" id="A5N497"/>
<dbReference type="STRING" id="431943.CKL_0049"/>
<dbReference type="KEGG" id="ckl:CKL_0049"/>
<dbReference type="eggNOG" id="COG0688">
    <property type="taxonomic scope" value="Bacteria"/>
</dbReference>
<dbReference type="HOGENOM" id="CLU_029061_2_2_9"/>
<dbReference type="UniPathway" id="UPA00558">
    <property type="reaction ID" value="UER00616"/>
</dbReference>
<dbReference type="Proteomes" id="UP000002411">
    <property type="component" value="Chromosome"/>
</dbReference>
<dbReference type="GO" id="GO:0005886">
    <property type="term" value="C:plasma membrane"/>
    <property type="evidence" value="ECO:0007669"/>
    <property type="project" value="UniProtKB-SubCell"/>
</dbReference>
<dbReference type="GO" id="GO:0004609">
    <property type="term" value="F:phosphatidylserine decarboxylase activity"/>
    <property type="evidence" value="ECO:0007669"/>
    <property type="project" value="UniProtKB-UniRule"/>
</dbReference>
<dbReference type="GO" id="GO:0006646">
    <property type="term" value="P:phosphatidylethanolamine biosynthetic process"/>
    <property type="evidence" value="ECO:0007669"/>
    <property type="project" value="UniProtKB-UniRule"/>
</dbReference>
<dbReference type="HAMAP" id="MF_00663">
    <property type="entry name" value="PS_decarb_PSD_B_type2"/>
    <property type="match status" value="1"/>
</dbReference>
<dbReference type="InterPro" id="IPR003817">
    <property type="entry name" value="PS_Dcarbxylase"/>
</dbReference>
<dbReference type="InterPro" id="IPR033177">
    <property type="entry name" value="PSD-B"/>
</dbReference>
<dbReference type="InterPro" id="IPR033179">
    <property type="entry name" value="PSD_type2_pro"/>
</dbReference>
<dbReference type="NCBIfam" id="NF001941">
    <property type="entry name" value="PRK00723.1"/>
    <property type="match status" value="1"/>
</dbReference>
<dbReference type="NCBIfam" id="TIGR00163">
    <property type="entry name" value="PS_decarb"/>
    <property type="match status" value="1"/>
</dbReference>
<dbReference type="PANTHER" id="PTHR10067">
    <property type="entry name" value="PHOSPHATIDYLSERINE DECARBOXYLASE"/>
    <property type="match status" value="1"/>
</dbReference>
<dbReference type="PANTHER" id="PTHR10067:SF17">
    <property type="entry name" value="PHOSPHATIDYLSERINE DECARBOXYLASE PROENZYME 2"/>
    <property type="match status" value="1"/>
</dbReference>
<dbReference type="Pfam" id="PF02666">
    <property type="entry name" value="PS_Dcarbxylase"/>
    <property type="match status" value="1"/>
</dbReference>
<organism>
    <name type="scientific">Clostridium kluyveri (strain ATCC 8527 / DSM 555 / NBRC 12016 / NCIMB 10680 / K1)</name>
    <dbReference type="NCBI Taxonomy" id="431943"/>
    <lineage>
        <taxon>Bacteria</taxon>
        <taxon>Bacillati</taxon>
        <taxon>Bacillota</taxon>
        <taxon>Clostridia</taxon>
        <taxon>Eubacteriales</taxon>
        <taxon>Clostridiaceae</taxon>
        <taxon>Clostridium</taxon>
    </lineage>
</organism>
<protein>
    <recommendedName>
        <fullName evidence="1">Phosphatidylserine decarboxylase proenzyme</fullName>
        <ecNumber evidence="1">4.1.1.65</ecNumber>
    </recommendedName>
    <component>
        <recommendedName>
            <fullName evidence="1">Phosphatidylserine decarboxylase alpha chain</fullName>
        </recommendedName>
    </component>
    <component>
        <recommendedName>
            <fullName evidence="1">Phosphatidylserine decarboxylase beta chain</fullName>
        </recommendedName>
    </component>
</protein>
<keyword id="KW-1003">Cell membrane</keyword>
<keyword id="KW-0210">Decarboxylase</keyword>
<keyword id="KW-0444">Lipid biosynthesis</keyword>
<keyword id="KW-0443">Lipid metabolism</keyword>
<keyword id="KW-0456">Lyase</keyword>
<keyword id="KW-0472">Membrane</keyword>
<keyword id="KW-0594">Phospholipid biosynthesis</keyword>
<keyword id="KW-1208">Phospholipid metabolism</keyword>
<keyword id="KW-0670">Pyruvate</keyword>
<keyword id="KW-1185">Reference proteome</keyword>
<keyword id="KW-0865">Zymogen</keyword>
<proteinExistence type="inferred from homology"/>
<gene>
    <name evidence="1" type="primary">psd</name>
    <name type="ordered locus">CKL_0049</name>
</gene>
<evidence type="ECO:0000255" key="1">
    <source>
        <dbReference type="HAMAP-Rule" id="MF_00663"/>
    </source>
</evidence>
<feature type="chain" id="PRO_1000082912" description="Phosphatidylserine decarboxylase beta chain" evidence="1">
    <location>
        <begin position="1"/>
        <end position="255"/>
    </location>
</feature>
<feature type="chain" id="PRO_1000082913" description="Phosphatidylserine decarboxylase alpha chain" evidence="1">
    <location>
        <begin position="256"/>
        <end position="296"/>
    </location>
</feature>
<feature type="active site" description="Charge relay system; for autoendoproteolytic cleavage activity" evidence="1">
    <location>
        <position position="113"/>
    </location>
</feature>
<feature type="active site" description="Charge relay system; for autoendoproteolytic cleavage activity" evidence="1">
    <location>
        <position position="169"/>
    </location>
</feature>
<feature type="active site" description="Charge relay system; for autoendoproteolytic cleavage activity" evidence="1">
    <location>
        <position position="256"/>
    </location>
</feature>
<feature type="active site" description="Schiff-base intermediate with substrate; via pyruvic acid; for decarboxylase activity" evidence="1">
    <location>
        <position position="256"/>
    </location>
</feature>
<feature type="site" description="Cleavage (non-hydrolytic); by autocatalysis" evidence="1">
    <location>
        <begin position="255"/>
        <end position="256"/>
    </location>
</feature>
<feature type="modified residue" description="Pyruvic acid (Ser); by autocatalysis" evidence="1">
    <location>
        <position position="256"/>
    </location>
</feature>
<reference key="1">
    <citation type="journal article" date="2008" name="Proc. Natl. Acad. Sci. U.S.A.">
        <title>The genome of Clostridium kluyveri, a strict anaerobe with unique metabolic features.</title>
        <authorList>
            <person name="Seedorf H."/>
            <person name="Fricke W.F."/>
            <person name="Veith B."/>
            <person name="Brueggemann H."/>
            <person name="Liesegang H."/>
            <person name="Strittmatter A."/>
            <person name="Miethke M."/>
            <person name="Buckel W."/>
            <person name="Hinderberger J."/>
            <person name="Li F."/>
            <person name="Hagemeier C."/>
            <person name="Thauer R.K."/>
            <person name="Gottschalk G."/>
        </authorList>
    </citation>
    <scope>NUCLEOTIDE SEQUENCE [LARGE SCALE GENOMIC DNA]</scope>
    <source>
        <strain>ATCC 8527 / DSM 555 / NBRC 12016 / NCIMB 10680 / K1</strain>
    </source>
</reference>
<sequence length="296" mass="34940">MIKYFNRKTKQYEIEQVAGEKYLKWTYCSPIGMKLLELIIKKKIFSKLYGYFCNSRYSKKNIYPFIKNFNINMDDYIEQTDNFKCFNDFFSRALKNNSRSIDRDEKVLISPGDGRLQVYENIDLNKIVQIKGFTYSLYNLINDIEIAKRFYKGTCLILRLCPTDYHRFHFIDYGICDFTHKIKGNYYSVNPIALRNISNIFCRNKREWSIFHSKNFGDILYVEVGATCVGSIVQTYFPGKHVSKGDEKGYFKFGGSTIILFFEQNKIRIHKDLLEQSNMGYETKVLMGESIGIKYQ</sequence>